<name>VATD_MANSE</name>
<sequence>MSGKDRLAIFPSRGAQMLMKGRLAGAQKGHGLLKKKADALQVRFRLILSKIIETKTLMGEVMKEAAFSLAEAKFTTGDFNQVVLQNVTKAQIKIRSKKDNVAGVTLPIFESYQDGSDTYELAGLARGGQQLAKLKKNFQSAVKLLVELASLQTSFVTLDEVIKITNRRVNAIEHVIIPRLERTLAYIISELDELEREEFYRLKKIQDKKKIIKDKAEAKKAALRAAGQDLRDSANLLDEGDEDLLF</sequence>
<proteinExistence type="evidence at transcript level"/>
<evidence type="ECO:0000250" key="1">
    <source>
        <dbReference type="UniProtKB" id="P39942"/>
    </source>
</evidence>
<evidence type="ECO:0000250" key="2">
    <source>
        <dbReference type="UniProtKB" id="Q9Y5K8"/>
    </source>
</evidence>
<evidence type="ECO:0000305" key="3"/>
<dbReference type="EMBL" id="AJ251992">
    <property type="protein sequence ID" value="CAB65912.1"/>
    <property type="molecule type" value="mRNA"/>
</dbReference>
<dbReference type="RefSeq" id="XP_030037186.1">
    <property type="nucleotide sequence ID" value="XM_030181326.2"/>
</dbReference>
<dbReference type="SMR" id="Q9U0S4"/>
<dbReference type="DIP" id="DIP-61389N"/>
<dbReference type="IntAct" id="Q9U0S4">
    <property type="interactions" value="1"/>
</dbReference>
<dbReference type="EnsemblMetazoa" id="XM_030181326.2">
    <property type="protein sequence ID" value="XP_030037186.1"/>
    <property type="gene ID" value="LOC115452727"/>
</dbReference>
<dbReference type="GeneID" id="115452727"/>
<dbReference type="OrthoDB" id="7676488at2759"/>
<dbReference type="GO" id="GO:0046961">
    <property type="term" value="F:proton-transporting ATPase activity, rotational mechanism"/>
    <property type="evidence" value="ECO:0007669"/>
    <property type="project" value="InterPro"/>
</dbReference>
<dbReference type="FunFam" id="1.10.287.3240:FF:000001">
    <property type="entry name" value="V-type proton ATPase subunit D"/>
    <property type="match status" value="1"/>
</dbReference>
<dbReference type="Gene3D" id="1.10.287.3240">
    <property type="match status" value="1"/>
</dbReference>
<dbReference type="InterPro" id="IPR002699">
    <property type="entry name" value="V_ATPase_D"/>
</dbReference>
<dbReference type="NCBIfam" id="TIGR00309">
    <property type="entry name" value="V_ATPase_subD"/>
    <property type="match status" value="1"/>
</dbReference>
<dbReference type="PANTHER" id="PTHR11671">
    <property type="entry name" value="V-TYPE ATP SYNTHASE SUBUNIT D"/>
    <property type="match status" value="1"/>
</dbReference>
<dbReference type="Pfam" id="PF01813">
    <property type="entry name" value="ATP-synt_D"/>
    <property type="match status" value="1"/>
</dbReference>
<accession>Q9U0S4</accession>
<protein>
    <recommendedName>
        <fullName>V-type proton ATPase subunit D</fullName>
        <shortName>V-ATPase subunit D</shortName>
    </recommendedName>
    <alternativeName>
        <fullName>Vacuolar proton pump subunit D</fullName>
    </alternativeName>
</protein>
<feature type="chain" id="PRO_0000144238" description="V-type proton ATPase subunit D">
    <location>
        <begin position="1"/>
        <end position="246"/>
    </location>
</feature>
<comment type="function">
    <text evidence="1 2">Subunit of the V1 complex of vacuolar(H+)-ATPase (V-ATPase), a multisubunit enzyme composed of a peripheral complex (V1) that hydrolyzes ATP and a membrane integral complex (V0) that translocates protons (By similarity). V-ATPase is responsible for acidifying and maintaining the pH of intracellular compartments and in some cell types, is targeted to the plasma membrane, where it is responsible for acidifying the extracellular environment (By similarity).</text>
</comment>
<comment type="subunit">
    <text evidence="2">V-ATPase is a heteromultimeric enzyme made up of two complexes: the ATP-hydrolytic V1 complex and the proton translocation V0 complex (By similarity). The V1 complex consists of three catalytic AB heterodimers that form a heterohexamer, three peripheral stalks each consisting of EG heterodimers, one central rotor including subunits D and F, and the regulatory subunits C and H (By similarity). The proton translocation complex V0 consists of the proton transport subunit a, a ring of proteolipid subunits c9c'', rotary subunit d, subunits e and f, and the accessory subunits VhaAC45 and ATP6AP2 (By similarity).</text>
</comment>
<comment type="similarity">
    <text evidence="3">Belongs to the V-ATPase D subunit family.</text>
</comment>
<reference key="1">
    <citation type="journal article" date="2000" name="Biochim. Biophys. Acta">
        <title>The multigene family of the tobacco hornworm V-ATPase: novel subunits a, C, D, H, and putative isoforms.</title>
        <authorList>
            <person name="Merzendorfer H."/>
            <person name="Reineke S."/>
            <person name="Zhao X.F."/>
            <person name="Jacobmeier B."/>
            <person name="Harvey W.R."/>
            <person name="Wieczorek H."/>
        </authorList>
    </citation>
    <scope>NUCLEOTIDE SEQUENCE [MRNA]</scope>
    <source>
        <tissue>Midgut</tissue>
    </source>
</reference>
<organism>
    <name type="scientific">Manduca sexta</name>
    <name type="common">Tobacco hawkmoth</name>
    <name type="synonym">Tobacco hornworm</name>
    <dbReference type="NCBI Taxonomy" id="7130"/>
    <lineage>
        <taxon>Eukaryota</taxon>
        <taxon>Metazoa</taxon>
        <taxon>Ecdysozoa</taxon>
        <taxon>Arthropoda</taxon>
        <taxon>Hexapoda</taxon>
        <taxon>Insecta</taxon>
        <taxon>Pterygota</taxon>
        <taxon>Neoptera</taxon>
        <taxon>Endopterygota</taxon>
        <taxon>Lepidoptera</taxon>
        <taxon>Glossata</taxon>
        <taxon>Ditrysia</taxon>
        <taxon>Bombycoidea</taxon>
        <taxon>Sphingidae</taxon>
        <taxon>Sphinginae</taxon>
        <taxon>Sphingini</taxon>
        <taxon>Manduca</taxon>
    </lineage>
</organism>
<keyword id="KW-0375">Hydrogen ion transport</keyword>
<keyword id="KW-0406">Ion transport</keyword>
<keyword id="KW-0813">Transport</keyword>